<sequence>MVQEYDVIVIGAGHAGVEAGLASARRGAKTLMLTINLDNIAFMPCNPSVGGPAKGIVVREIDALGGQMAKTIDKTHIQMRMLNTGKGPAVRALRAQADKVLYQQEMKRVIEDEENLHIMQGMVDELIIEDNEVKGVRTNIGTEYLSKAVIITTGTFLRGEIILGNMKYSSGPNHQLPSITLSDNLRELGFDIVRFKTGTPPRVNSKTIDYSKTEIQPGDDVGRAFSFETTEYILDQLPCWLTYTNAETHKVIDDNLHLSAMYSGMIKGTGPRYCPSIEDKFVRFNDKPRHQLFLEPEGRNTNEVYVQGLSTSLPEHVQRQMLETIPGLEKADMMRAGYAIEYDAIVPTQLWPTLETKMIKNLYTAGQINGTSGYEEAAGQGLMAGINAAGKVLNTGEKILSRSDAYIGVLIDDLVTKGTNEPYRLLTSRAEYRLLLRHDNADLRLTDMGYELGMISEERYARFNEKRQQIDAEIKRLSDIRIKPNEHTQAIIEQHGGSRLKDGILAIDLLRRPEMTYDIILELLEEEHQLNADVEEQVEIQTKYEGYINKSLQQVEKVKRMEEKKIPEDLDYSKIDSLATEAREKLSEVKPLNIAQASRISGVNPADISILLIYLEQGKLQRVSD</sequence>
<protein>
    <recommendedName>
        <fullName evidence="1">tRNA uridine 5-carboxymethylaminomethyl modification enzyme MnmG</fullName>
    </recommendedName>
    <alternativeName>
        <fullName evidence="1">Glucose-inhibited division protein A</fullName>
    </alternativeName>
</protein>
<name>MNMG_STAA8</name>
<feature type="chain" id="PRO_0000345338" description="tRNA uridine 5-carboxymethylaminomethyl modification enzyme MnmG">
    <location>
        <begin position="1"/>
        <end position="625"/>
    </location>
</feature>
<feature type="binding site" evidence="1">
    <location>
        <begin position="11"/>
        <end position="16"/>
    </location>
    <ligand>
        <name>FAD</name>
        <dbReference type="ChEBI" id="CHEBI:57692"/>
    </ligand>
</feature>
<feature type="binding site" evidence="1">
    <location>
        <position position="123"/>
    </location>
    <ligand>
        <name>FAD</name>
        <dbReference type="ChEBI" id="CHEBI:57692"/>
    </ligand>
</feature>
<feature type="binding site" evidence="1">
    <location>
        <position position="178"/>
    </location>
    <ligand>
        <name>FAD</name>
        <dbReference type="ChEBI" id="CHEBI:57692"/>
    </ligand>
</feature>
<feature type="binding site" evidence="1">
    <location>
        <begin position="270"/>
        <end position="284"/>
    </location>
    <ligand>
        <name>NAD(+)</name>
        <dbReference type="ChEBI" id="CHEBI:57540"/>
    </ligand>
</feature>
<feature type="binding site" evidence="1">
    <location>
        <position position="367"/>
    </location>
    <ligand>
        <name>FAD</name>
        <dbReference type="ChEBI" id="CHEBI:57692"/>
    </ligand>
</feature>
<evidence type="ECO:0000255" key="1">
    <source>
        <dbReference type="HAMAP-Rule" id="MF_00129"/>
    </source>
</evidence>
<evidence type="ECO:0000305" key="2"/>
<accession>Q2FUQ3</accession>
<organism>
    <name type="scientific">Staphylococcus aureus (strain NCTC 8325 / PS 47)</name>
    <dbReference type="NCBI Taxonomy" id="93061"/>
    <lineage>
        <taxon>Bacteria</taxon>
        <taxon>Bacillati</taxon>
        <taxon>Bacillota</taxon>
        <taxon>Bacilli</taxon>
        <taxon>Bacillales</taxon>
        <taxon>Staphylococcaceae</taxon>
        <taxon>Staphylococcus</taxon>
    </lineage>
</organism>
<reference key="1">
    <citation type="book" date="2006" name="Gram positive pathogens, 2nd edition">
        <title>The Staphylococcus aureus NCTC 8325 genome.</title>
        <editorList>
            <person name="Fischetti V."/>
            <person name="Novick R."/>
            <person name="Ferretti J."/>
            <person name="Portnoy D."/>
            <person name="Rood J."/>
        </editorList>
        <authorList>
            <person name="Gillaspy A.F."/>
            <person name="Worrell V."/>
            <person name="Orvis J."/>
            <person name="Roe B.A."/>
            <person name="Dyer D.W."/>
            <person name="Iandolo J.J."/>
        </authorList>
    </citation>
    <scope>NUCLEOTIDE SEQUENCE [LARGE SCALE GENOMIC DNA]</scope>
    <source>
        <strain>NCTC 8325 / PS 47</strain>
    </source>
</reference>
<comment type="function">
    <text evidence="1">NAD-binding protein involved in the addition of a carboxymethylaminomethyl (cmnm) group at the wobble position (U34) of certain tRNAs, forming tRNA-cmnm(5)s(2)U34.</text>
</comment>
<comment type="cofactor">
    <cofactor evidence="1">
        <name>FAD</name>
        <dbReference type="ChEBI" id="CHEBI:57692"/>
    </cofactor>
</comment>
<comment type="subunit">
    <text evidence="1">Homodimer. Heterotetramer of two MnmE and two MnmG subunits.</text>
</comment>
<comment type="subcellular location">
    <subcellularLocation>
        <location evidence="1">Cytoplasm</location>
    </subcellularLocation>
</comment>
<comment type="similarity">
    <text evidence="1">Belongs to the MnmG family.</text>
</comment>
<comment type="sequence caution" evidence="2">
    <conflict type="erroneous initiation">
        <sequence resource="EMBL-CDS" id="ABD32034"/>
    </conflict>
</comment>
<keyword id="KW-0963">Cytoplasm</keyword>
<keyword id="KW-0274">FAD</keyword>
<keyword id="KW-0285">Flavoprotein</keyword>
<keyword id="KW-0520">NAD</keyword>
<keyword id="KW-1185">Reference proteome</keyword>
<keyword id="KW-0819">tRNA processing</keyword>
<proteinExistence type="inferred from homology"/>
<dbReference type="EMBL" id="CP000253">
    <property type="protein sequence ID" value="ABD32034.1"/>
    <property type="status" value="ALT_INIT"/>
    <property type="molecule type" value="Genomic_DNA"/>
</dbReference>
<dbReference type="RefSeq" id="WP_000249662.1">
    <property type="nucleotide sequence ID" value="NZ_LS483365.1"/>
</dbReference>
<dbReference type="RefSeq" id="YP_501497.2">
    <property type="nucleotide sequence ID" value="NC_007795.1"/>
</dbReference>
<dbReference type="SMR" id="Q2FUQ3"/>
<dbReference type="STRING" id="93061.SAOUHSC_03052"/>
<dbReference type="PaxDb" id="1280-SAXN108_2989"/>
<dbReference type="GeneID" id="3921315"/>
<dbReference type="KEGG" id="sao:SAOUHSC_03052"/>
<dbReference type="PATRIC" id="fig|93061.5.peg.2757"/>
<dbReference type="eggNOG" id="COG0445">
    <property type="taxonomic scope" value="Bacteria"/>
</dbReference>
<dbReference type="HOGENOM" id="CLU_007831_2_2_9"/>
<dbReference type="OrthoDB" id="9815560at2"/>
<dbReference type="PRO" id="PR:Q2FUQ3"/>
<dbReference type="Proteomes" id="UP000008816">
    <property type="component" value="Chromosome"/>
</dbReference>
<dbReference type="GO" id="GO:0005829">
    <property type="term" value="C:cytosol"/>
    <property type="evidence" value="ECO:0000318"/>
    <property type="project" value="GO_Central"/>
</dbReference>
<dbReference type="GO" id="GO:0050660">
    <property type="term" value="F:flavin adenine dinucleotide binding"/>
    <property type="evidence" value="ECO:0000318"/>
    <property type="project" value="GO_Central"/>
</dbReference>
<dbReference type="GO" id="GO:0030488">
    <property type="term" value="P:tRNA methylation"/>
    <property type="evidence" value="ECO:0000318"/>
    <property type="project" value="GO_Central"/>
</dbReference>
<dbReference type="GO" id="GO:0002098">
    <property type="term" value="P:tRNA wobble uridine modification"/>
    <property type="evidence" value="ECO:0000318"/>
    <property type="project" value="GO_Central"/>
</dbReference>
<dbReference type="FunFam" id="1.10.10.1800:FF:000001">
    <property type="entry name" value="tRNA uridine 5-carboxymethylaminomethyl modification enzyme MnmG"/>
    <property type="match status" value="1"/>
</dbReference>
<dbReference type="FunFam" id="1.10.150.570:FF:000001">
    <property type="entry name" value="tRNA uridine 5-carboxymethylaminomethyl modification enzyme MnmG"/>
    <property type="match status" value="1"/>
</dbReference>
<dbReference type="FunFam" id="3.50.50.60:FF:000002">
    <property type="entry name" value="tRNA uridine 5-carboxymethylaminomethyl modification enzyme MnmG"/>
    <property type="match status" value="1"/>
</dbReference>
<dbReference type="FunFam" id="3.50.50.60:FF:000063">
    <property type="entry name" value="tRNA uridine 5-carboxymethylaminomethyl modification enzyme MnmG"/>
    <property type="match status" value="1"/>
</dbReference>
<dbReference type="Gene3D" id="3.50.50.60">
    <property type="entry name" value="FAD/NAD(P)-binding domain"/>
    <property type="match status" value="2"/>
</dbReference>
<dbReference type="Gene3D" id="1.10.150.570">
    <property type="entry name" value="GidA associated domain, C-terminal subdomain"/>
    <property type="match status" value="1"/>
</dbReference>
<dbReference type="Gene3D" id="1.10.10.1800">
    <property type="entry name" value="tRNA uridine 5-carboxymethylaminomethyl modification enzyme MnmG/GidA"/>
    <property type="match status" value="1"/>
</dbReference>
<dbReference type="HAMAP" id="MF_00129">
    <property type="entry name" value="MnmG_GidA"/>
    <property type="match status" value="1"/>
</dbReference>
<dbReference type="InterPro" id="IPR036188">
    <property type="entry name" value="FAD/NAD-bd_sf"/>
</dbReference>
<dbReference type="InterPro" id="IPR049312">
    <property type="entry name" value="GIDA_C_N"/>
</dbReference>
<dbReference type="InterPro" id="IPR004416">
    <property type="entry name" value="MnmG"/>
</dbReference>
<dbReference type="InterPro" id="IPR002218">
    <property type="entry name" value="MnmG-rel"/>
</dbReference>
<dbReference type="InterPro" id="IPR020595">
    <property type="entry name" value="MnmG-rel_CS"/>
</dbReference>
<dbReference type="InterPro" id="IPR026904">
    <property type="entry name" value="MnmG_C"/>
</dbReference>
<dbReference type="InterPro" id="IPR047001">
    <property type="entry name" value="MnmG_C_subdom"/>
</dbReference>
<dbReference type="InterPro" id="IPR044920">
    <property type="entry name" value="MnmG_C_subdom_sf"/>
</dbReference>
<dbReference type="InterPro" id="IPR040131">
    <property type="entry name" value="MnmG_N"/>
</dbReference>
<dbReference type="NCBIfam" id="TIGR00136">
    <property type="entry name" value="mnmG_gidA"/>
    <property type="match status" value="1"/>
</dbReference>
<dbReference type="PANTHER" id="PTHR11806">
    <property type="entry name" value="GLUCOSE INHIBITED DIVISION PROTEIN A"/>
    <property type="match status" value="1"/>
</dbReference>
<dbReference type="PANTHER" id="PTHR11806:SF0">
    <property type="entry name" value="PROTEIN MTO1 HOMOLOG, MITOCHONDRIAL"/>
    <property type="match status" value="1"/>
</dbReference>
<dbReference type="Pfam" id="PF01134">
    <property type="entry name" value="GIDA"/>
    <property type="match status" value="1"/>
</dbReference>
<dbReference type="Pfam" id="PF21680">
    <property type="entry name" value="GIDA_C_1st"/>
    <property type="match status" value="1"/>
</dbReference>
<dbReference type="Pfam" id="PF13932">
    <property type="entry name" value="SAM_GIDA_C"/>
    <property type="match status" value="1"/>
</dbReference>
<dbReference type="PRINTS" id="PR00411">
    <property type="entry name" value="PNDRDTASEI"/>
</dbReference>
<dbReference type="SMART" id="SM01228">
    <property type="entry name" value="GIDA_assoc_3"/>
    <property type="match status" value="1"/>
</dbReference>
<dbReference type="SUPFAM" id="SSF51905">
    <property type="entry name" value="FAD/NAD(P)-binding domain"/>
    <property type="match status" value="1"/>
</dbReference>
<dbReference type="PROSITE" id="PS01280">
    <property type="entry name" value="GIDA_1"/>
    <property type="match status" value="1"/>
</dbReference>
<dbReference type="PROSITE" id="PS01281">
    <property type="entry name" value="GIDA_2"/>
    <property type="match status" value="1"/>
</dbReference>
<gene>
    <name evidence="1" type="primary">mnmG</name>
    <name evidence="1" type="synonym">gidA</name>
    <name type="ordered locus">SAOUHSC_03052</name>
</gene>